<organism>
    <name type="scientific">Yersinia enterocolitica serotype O:8 / biotype 1B (strain NCTC 13174 / 8081)</name>
    <dbReference type="NCBI Taxonomy" id="393305"/>
    <lineage>
        <taxon>Bacteria</taxon>
        <taxon>Pseudomonadati</taxon>
        <taxon>Pseudomonadota</taxon>
        <taxon>Gammaproteobacteria</taxon>
        <taxon>Enterobacterales</taxon>
        <taxon>Yersiniaceae</taxon>
        <taxon>Yersinia</taxon>
    </lineage>
</organism>
<feature type="chain" id="PRO_1000064986" description="UPF0208 membrane protein YE1335">
    <location>
        <begin position="1"/>
        <end position="151"/>
    </location>
</feature>
<feature type="transmembrane region" description="Helical" evidence="1">
    <location>
        <begin position="46"/>
        <end position="66"/>
    </location>
</feature>
<feature type="transmembrane region" description="Helical" evidence="1">
    <location>
        <begin position="69"/>
        <end position="89"/>
    </location>
</feature>
<keyword id="KW-0997">Cell inner membrane</keyword>
<keyword id="KW-1003">Cell membrane</keyword>
<keyword id="KW-0472">Membrane</keyword>
<keyword id="KW-0812">Transmembrane</keyword>
<keyword id="KW-1133">Transmembrane helix</keyword>
<evidence type="ECO:0000255" key="1">
    <source>
        <dbReference type="HAMAP-Rule" id="MF_01101"/>
    </source>
</evidence>
<dbReference type="EMBL" id="AM286415">
    <property type="protein sequence ID" value="CAL11424.1"/>
    <property type="molecule type" value="Genomic_DNA"/>
</dbReference>
<dbReference type="RefSeq" id="YP_001005652.1">
    <property type="nucleotide sequence ID" value="NC_008800.1"/>
</dbReference>
<dbReference type="KEGG" id="yen:YE1335"/>
<dbReference type="PATRIC" id="fig|393305.7.peg.1453"/>
<dbReference type="eggNOG" id="COG3092">
    <property type="taxonomic scope" value="Bacteria"/>
</dbReference>
<dbReference type="HOGENOM" id="CLU_128746_0_0_6"/>
<dbReference type="OrthoDB" id="7066670at2"/>
<dbReference type="Proteomes" id="UP000000642">
    <property type="component" value="Chromosome"/>
</dbReference>
<dbReference type="GO" id="GO:0005886">
    <property type="term" value="C:plasma membrane"/>
    <property type="evidence" value="ECO:0007669"/>
    <property type="project" value="UniProtKB-SubCell"/>
</dbReference>
<dbReference type="HAMAP" id="MF_01101">
    <property type="entry name" value="UPF0208"/>
    <property type="match status" value="1"/>
</dbReference>
<dbReference type="InterPro" id="IPR007334">
    <property type="entry name" value="UPF0208"/>
</dbReference>
<dbReference type="NCBIfam" id="NF002493">
    <property type="entry name" value="PRK01816.1"/>
    <property type="match status" value="1"/>
</dbReference>
<dbReference type="Pfam" id="PF04217">
    <property type="entry name" value="DUF412"/>
    <property type="match status" value="1"/>
</dbReference>
<accession>A1JLD6</accession>
<reference key="1">
    <citation type="journal article" date="2006" name="PLoS Genet.">
        <title>The complete genome sequence and comparative genome analysis of the high pathogenicity Yersinia enterocolitica strain 8081.</title>
        <authorList>
            <person name="Thomson N.R."/>
            <person name="Howard S."/>
            <person name="Wren B.W."/>
            <person name="Holden M.T.G."/>
            <person name="Crossman L."/>
            <person name="Challis G.L."/>
            <person name="Churcher C."/>
            <person name="Mungall K."/>
            <person name="Brooks K."/>
            <person name="Chillingworth T."/>
            <person name="Feltwell T."/>
            <person name="Abdellah Z."/>
            <person name="Hauser H."/>
            <person name="Jagels K."/>
            <person name="Maddison M."/>
            <person name="Moule S."/>
            <person name="Sanders M."/>
            <person name="Whitehead S."/>
            <person name="Quail M.A."/>
            <person name="Dougan G."/>
            <person name="Parkhill J."/>
            <person name="Prentice M.B."/>
        </authorList>
    </citation>
    <scope>NUCLEOTIDE SEQUENCE [LARGE SCALE GENOMIC DNA]</scope>
    <source>
        <strain>NCTC 13174 / 8081</strain>
    </source>
</reference>
<gene>
    <name type="ordered locus">YE1335</name>
</gene>
<name>Y1335_YERE8</name>
<proteinExistence type="inferred from homology"/>
<protein>
    <recommendedName>
        <fullName evidence="1">UPF0208 membrane protein YE1335</fullName>
    </recommendedName>
</protein>
<sequence>MTTKPSDSVSWFQVLQRGQHYMKTWPADKRLAPVFPENRVATATRFGIRFMPPLAIFTLTWQIALGGQLGPAIATALFACGLPLQGLWWLGKRAITPLPPTLLQWFHEVRNKLAEAGQAVAPVEQTPTYQSLADVLKRAFKQLDKTFLDDL</sequence>
<comment type="subcellular location">
    <subcellularLocation>
        <location evidence="1">Cell inner membrane</location>
        <topology evidence="1">Multi-pass membrane protein</topology>
    </subcellularLocation>
</comment>
<comment type="similarity">
    <text evidence="1">Belongs to the UPF0208 family.</text>
</comment>